<proteinExistence type="inferred from homology"/>
<keyword id="KW-0240">DNA-directed RNA polymerase</keyword>
<keyword id="KW-0548">Nucleotidyltransferase</keyword>
<keyword id="KW-0804">Transcription</keyword>
<keyword id="KW-0808">Transferase</keyword>
<name>RPOB_HAEI8</name>
<protein>
    <recommendedName>
        <fullName evidence="1">DNA-directed RNA polymerase subunit beta</fullName>
        <shortName evidence="1">RNAP subunit beta</shortName>
        <ecNumber evidence="1">2.7.7.6</ecNumber>
    </recommendedName>
    <alternativeName>
        <fullName evidence="1">RNA polymerase subunit beta</fullName>
    </alternativeName>
    <alternativeName>
        <fullName evidence="1">Transcriptase subunit beta</fullName>
    </alternativeName>
</protein>
<comment type="function">
    <text evidence="1">DNA-dependent RNA polymerase catalyzes the transcription of DNA into RNA using the four ribonucleoside triphosphates as substrates.</text>
</comment>
<comment type="catalytic activity">
    <reaction evidence="1">
        <text>RNA(n) + a ribonucleoside 5'-triphosphate = RNA(n+1) + diphosphate</text>
        <dbReference type="Rhea" id="RHEA:21248"/>
        <dbReference type="Rhea" id="RHEA-COMP:14527"/>
        <dbReference type="Rhea" id="RHEA-COMP:17342"/>
        <dbReference type="ChEBI" id="CHEBI:33019"/>
        <dbReference type="ChEBI" id="CHEBI:61557"/>
        <dbReference type="ChEBI" id="CHEBI:140395"/>
        <dbReference type="EC" id="2.7.7.6"/>
    </reaction>
</comment>
<comment type="subunit">
    <text evidence="1">The RNAP catalytic core consists of 2 alpha, 1 beta, 1 beta' and 1 omega subunit. When a sigma factor is associated with the core the holoenzyme is formed, which can initiate transcription.</text>
</comment>
<comment type="similarity">
    <text evidence="1">Belongs to the RNA polymerase beta chain family.</text>
</comment>
<feature type="chain" id="PRO_0000224062" description="DNA-directed RNA polymerase subunit beta">
    <location>
        <begin position="1"/>
        <end position="1343"/>
    </location>
</feature>
<organism>
    <name type="scientific">Haemophilus influenzae (strain 86-028NP)</name>
    <dbReference type="NCBI Taxonomy" id="281310"/>
    <lineage>
        <taxon>Bacteria</taxon>
        <taxon>Pseudomonadati</taxon>
        <taxon>Pseudomonadota</taxon>
        <taxon>Gammaproteobacteria</taxon>
        <taxon>Pasteurellales</taxon>
        <taxon>Pasteurellaceae</taxon>
        <taxon>Haemophilus</taxon>
    </lineage>
</organism>
<evidence type="ECO:0000255" key="1">
    <source>
        <dbReference type="HAMAP-Rule" id="MF_01321"/>
    </source>
</evidence>
<dbReference type="EC" id="2.7.7.6" evidence="1"/>
<dbReference type="EMBL" id="CP000057">
    <property type="protein sequence ID" value="AAX87564.1"/>
    <property type="molecule type" value="Genomic_DNA"/>
</dbReference>
<dbReference type="RefSeq" id="WP_011272094.1">
    <property type="nucleotide sequence ID" value="NC_007146.2"/>
</dbReference>
<dbReference type="SMR" id="Q4QN33"/>
<dbReference type="GeneID" id="93219524"/>
<dbReference type="KEGG" id="hit:NTHI0641"/>
<dbReference type="HOGENOM" id="CLU_000524_4_0_6"/>
<dbReference type="Proteomes" id="UP000002525">
    <property type="component" value="Chromosome"/>
</dbReference>
<dbReference type="GO" id="GO:0000428">
    <property type="term" value="C:DNA-directed RNA polymerase complex"/>
    <property type="evidence" value="ECO:0007669"/>
    <property type="project" value="UniProtKB-KW"/>
</dbReference>
<dbReference type="GO" id="GO:0003677">
    <property type="term" value="F:DNA binding"/>
    <property type="evidence" value="ECO:0007669"/>
    <property type="project" value="UniProtKB-UniRule"/>
</dbReference>
<dbReference type="GO" id="GO:0003899">
    <property type="term" value="F:DNA-directed RNA polymerase activity"/>
    <property type="evidence" value="ECO:0007669"/>
    <property type="project" value="UniProtKB-UniRule"/>
</dbReference>
<dbReference type="GO" id="GO:0032549">
    <property type="term" value="F:ribonucleoside binding"/>
    <property type="evidence" value="ECO:0007669"/>
    <property type="project" value="InterPro"/>
</dbReference>
<dbReference type="GO" id="GO:0006351">
    <property type="term" value="P:DNA-templated transcription"/>
    <property type="evidence" value="ECO:0007669"/>
    <property type="project" value="UniProtKB-UniRule"/>
</dbReference>
<dbReference type="CDD" id="cd00653">
    <property type="entry name" value="RNA_pol_B_RPB2"/>
    <property type="match status" value="1"/>
</dbReference>
<dbReference type="FunFam" id="2.40.270.10:FF:000004">
    <property type="entry name" value="DNA-directed RNA polymerase subunit beta"/>
    <property type="match status" value="1"/>
</dbReference>
<dbReference type="FunFam" id="2.40.50.100:FF:000006">
    <property type="entry name" value="DNA-directed RNA polymerase subunit beta"/>
    <property type="match status" value="1"/>
</dbReference>
<dbReference type="FunFam" id="2.40.50.150:FF:000001">
    <property type="entry name" value="DNA-directed RNA polymerase subunit beta"/>
    <property type="match status" value="1"/>
</dbReference>
<dbReference type="FunFam" id="3.90.1100.10:FF:000002">
    <property type="entry name" value="DNA-directed RNA polymerase subunit beta"/>
    <property type="match status" value="1"/>
</dbReference>
<dbReference type="FunFam" id="3.90.1110.10:FF:000001">
    <property type="entry name" value="DNA-directed RNA polymerase subunit beta"/>
    <property type="match status" value="1"/>
</dbReference>
<dbReference type="FunFam" id="3.90.1110.10:FF:000004">
    <property type="entry name" value="DNA-directed RNA polymerase subunit beta"/>
    <property type="match status" value="1"/>
</dbReference>
<dbReference type="FunFam" id="3.90.1800.10:FF:000001">
    <property type="entry name" value="DNA-directed RNA polymerase subunit beta"/>
    <property type="match status" value="1"/>
</dbReference>
<dbReference type="Gene3D" id="2.40.50.100">
    <property type="match status" value="1"/>
</dbReference>
<dbReference type="Gene3D" id="2.40.50.150">
    <property type="match status" value="1"/>
</dbReference>
<dbReference type="Gene3D" id="3.90.1100.10">
    <property type="match status" value="2"/>
</dbReference>
<dbReference type="Gene3D" id="2.30.150.10">
    <property type="entry name" value="DNA-directed RNA polymerase, beta subunit, external 1 domain"/>
    <property type="match status" value="1"/>
</dbReference>
<dbReference type="Gene3D" id="2.40.270.10">
    <property type="entry name" value="DNA-directed RNA polymerase, subunit 2, domain 6"/>
    <property type="match status" value="2"/>
</dbReference>
<dbReference type="Gene3D" id="3.90.1800.10">
    <property type="entry name" value="RNA polymerase alpha subunit dimerisation domain"/>
    <property type="match status" value="1"/>
</dbReference>
<dbReference type="Gene3D" id="3.90.1110.10">
    <property type="entry name" value="RNA polymerase Rpb2, domain 2"/>
    <property type="match status" value="2"/>
</dbReference>
<dbReference type="HAMAP" id="MF_01321">
    <property type="entry name" value="RNApol_bact_RpoB"/>
    <property type="match status" value="1"/>
</dbReference>
<dbReference type="InterPro" id="IPR042107">
    <property type="entry name" value="DNA-dir_RNA_pol_bsu_ext_1_sf"/>
</dbReference>
<dbReference type="InterPro" id="IPR019462">
    <property type="entry name" value="DNA-dir_RNA_pol_bsu_external_1"/>
</dbReference>
<dbReference type="InterPro" id="IPR015712">
    <property type="entry name" value="DNA-dir_RNA_pol_su2"/>
</dbReference>
<dbReference type="InterPro" id="IPR007120">
    <property type="entry name" value="DNA-dir_RNAP_su2_dom"/>
</dbReference>
<dbReference type="InterPro" id="IPR037033">
    <property type="entry name" value="DNA-dir_RNAP_su2_hyb_sf"/>
</dbReference>
<dbReference type="InterPro" id="IPR010243">
    <property type="entry name" value="RNA_pol_bsu_bac"/>
</dbReference>
<dbReference type="InterPro" id="IPR007121">
    <property type="entry name" value="RNA_pol_bsu_CS"/>
</dbReference>
<dbReference type="InterPro" id="IPR007644">
    <property type="entry name" value="RNA_pol_bsu_protrusion"/>
</dbReference>
<dbReference type="InterPro" id="IPR007642">
    <property type="entry name" value="RNA_pol_Rpb2_2"/>
</dbReference>
<dbReference type="InterPro" id="IPR037034">
    <property type="entry name" value="RNA_pol_Rpb2_2_sf"/>
</dbReference>
<dbReference type="InterPro" id="IPR007645">
    <property type="entry name" value="RNA_pol_Rpb2_3"/>
</dbReference>
<dbReference type="InterPro" id="IPR007641">
    <property type="entry name" value="RNA_pol_Rpb2_7"/>
</dbReference>
<dbReference type="InterPro" id="IPR014724">
    <property type="entry name" value="RNA_pol_RPB2_OB-fold"/>
</dbReference>
<dbReference type="NCBIfam" id="NF001616">
    <property type="entry name" value="PRK00405.1"/>
    <property type="match status" value="1"/>
</dbReference>
<dbReference type="NCBIfam" id="TIGR02013">
    <property type="entry name" value="rpoB"/>
    <property type="match status" value="1"/>
</dbReference>
<dbReference type="PANTHER" id="PTHR20856">
    <property type="entry name" value="DNA-DIRECTED RNA POLYMERASE I SUBUNIT 2"/>
    <property type="match status" value="1"/>
</dbReference>
<dbReference type="Pfam" id="PF04563">
    <property type="entry name" value="RNA_pol_Rpb2_1"/>
    <property type="match status" value="1"/>
</dbReference>
<dbReference type="Pfam" id="PF04561">
    <property type="entry name" value="RNA_pol_Rpb2_2"/>
    <property type="match status" value="2"/>
</dbReference>
<dbReference type="Pfam" id="PF04565">
    <property type="entry name" value="RNA_pol_Rpb2_3"/>
    <property type="match status" value="1"/>
</dbReference>
<dbReference type="Pfam" id="PF10385">
    <property type="entry name" value="RNA_pol_Rpb2_45"/>
    <property type="match status" value="1"/>
</dbReference>
<dbReference type="Pfam" id="PF00562">
    <property type="entry name" value="RNA_pol_Rpb2_6"/>
    <property type="match status" value="1"/>
</dbReference>
<dbReference type="Pfam" id="PF04560">
    <property type="entry name" value="RNA_pol_Rpb2_7"/>
    <property type="match status" value="1"/>
</dbReference>
<dbReference type="SUPFAM" id="SSF64484">
    <property type="entry name" value="beta and beta-prime subunits of DNA dependent RNA-polymerase"/>
    <property type="match status" value="1"/>
</dbReference>
<dbReference type="PROSITE" id="PS01166">
    <property type="entry name" value="RNA_POL_BETA"/>
    <property type="match status" value="1"/>
</dbReference>
<accession>Q4QN33</accession>
<gene>
    <name evidence="1" type="primary">rpoB</name>
    <name type="ordered locus">NTHI0641</name>
</gene>
<reference key="1">
    <citation type="journal article" date="2005" name="J. Bacteriol.">
        <title>Genomic sequence of an otitis media isolate of nontypeable Haemophilus influenzae: comparative study with H. influenzae serotype d, strain KW20.</title>
        <authorList>
            <person name="Harrison A."/>
            <person name="Dyer D.W."/>
            <person name="Gillaspy A."/>
            <person name="Ray W.C."/>
            <person name="Mungur R."/>
            <person name="Carson M.B."/>
            <person name="Zhong H."/>
            <person name="Gipson J."/>
            <person name="Gipson M."/>
            <person name="Johnson L.S."/>
            <person name="Lewis L."/>
            <person name="Bakaletz L.O."/>
            <person name="Munson R.S. Jr."/>
        </authorList>
    </citation>
    <scope>NUCLEOTIDE SEQUENCE [LARGE SCALE GENOMIC DNA]</scope>
    <source>
        <strain>86-028NP</strain>
    </source>
</reference>
<sequence>MGYSYSEKKRIRKDFGKRPQVLNVPYLLTIQLDSFDKFIQKDPEGQQGLEAAFRSVFPIVSNNGYTELQYVDYRLEEPEFDVRECQIRGSTYAAGLRVKLRLVSYDKESSSRAVKDIKENEVYMGEIPLMTDNGTFVINGTERVIVSQLHRSPGVFFDSDKGKTHSSGKVLYNARIIPYRGSWLDFEFDPKDNLFARIDRRRKLPATIILRALGYTTEEILNLFFDKITFEIAGDKLLMTLVPERLRGETASFDIEANGKVYVERGRRITARHIKALEKDNISQVVVPSEYILGKVASKDYVDLESGEIICPANGEISLETLAKLAQAGYTTIETLFTNDLDYGPYISETLRVDPTYDKTSALYEIYRMMRPGEPPTPESSEALFNNLFFSAERYDLSTVGRMKFNRSLAFPEGEGAGILSNEDIIAVMRKLIDIRNGRGEVDDIDHLGNRRIRSVGEMAENQFRIGLVRVERAVKERLSLGDLDAITPQDLINPKPISAAVKEFFGSSQLSQFMDQNNPLSEVTHKRRISALGPGGLTRERAGFEVRDVHNTHYGRLCPIETPEGPNIGLINSLSAFARTNDYGFLETPYRKVVDGQVTEEIEYLSVIDEANYIIAQANSNLDENNRFTDAFVTARGERGESGLYKPEDIHYMDVSTQQVVSVAAALIPFLEHDDANRALMGANMQRQAVPTLRADKPLVGTGMEKPIALDSGVAVVAKRGGTVQYVDASRIVIKVNEDETIAGEAGIDIYNLIKYTRSNQNTCINQIPCVNLGDPINRGEVLADGPSTDLGELALGQNIRVAFMPWNGYNFEDSMLVSERVVQQDRFTTIHIQELSCVARDTKLGAEEITADIPNVGESALSKLDESGIVYVGAEVKGGDILVGKVTPKGETQLTPEEKLLRAIFGEKASDVKDSSLRVPNGTSGTVIDVQVFTRDGVEKDKRALEIEEMQLREAKKDLTEELEILEAGLFARVRNLLISSGADAAQLDKVDRTKWLEQTIADEEKQNQLEQLAEQYEELRKEFEHKLEVKRKKIIKGDDLAPGVLKVVKVYLAVKRQIQPGDKMAGRHGNKGVISKINPVEDMPYDENGQPVEIVLNPLGVPSRMNIGQILETHLGLAAKGIGDQINAMLKQKQEVEKLRSYIQKAYDLLGNGSQKVDLSTFTDEEVLRLAGNLRKGLPVATPVFDGADEAEIKELLKLGGLPTSGQITLYDGRTGEKFERPVTVGYMYMLKLNHLVDDKMHARSTGSYSLVTQQPLGGKAQFGGQRFGEMEVWALEAYGAAYTLQEMLTVKSDDVNGRTKMYKNIVSGNQHMEPGTPESFNVIMKEIRSLGLNIELDEE</sequence>